<feature type="chain" id="PRO_0000243349" description="Dephospho-CoA kinase">
    <location>
        <begin position="1"/>
        <end position="197"/>
    </location>
</feature>
<feature type="domain" description="DPCK" evidence="1">
    <location>
        <begin position="2"/>
        <end position="197"/>
    </location>
</feature>
<feature type="binding site" evidence="1">
    <location>
        <begin position="10"/>
        <end position="15"/>
    </location>
    <ligand>
        <name>ATP</name>
        <dbReference type="ChEBI" id="CHEBI:30616"/>
    </ligand>
</feature>
<keyword id="KW-0067">ATP-binding</keyword>
<keyword id="KW-0173">Coenzyme A biosynthesis</keyword>
<keyword id="KW-0963">Cytoplasm</keyword>
<keyword id="KW-0418">Kinase</keyword>
<keyword id="KW-0547">Nucleotide-binding</keyword>
<keyword id="KW-0808">Transferase</keyword>
<comment type="function">
    <text evidence="1">Catalyzes the phosphorylation of the 3'-hydroxyl group of dephosphocoenzyme A to form coenzyme A.</text>
</comment>
<comment type="catalytic activity">
    <reaction evidence="1">
        <text>3'-dephospho-CoA + ATP = ADP + CoA + H(+)</text>
        <dbReference type="Rhea" id="RHEA:18245"/>
        <dbReference type="ChEBI" id="CHEBI:15378"/>
        <dbReference type="ChEBI" id="CHEBI:30616"/>
        <dbReference type="ChEBI" id="CHEBI:57287"/>
        <dbReference type="ChEBI" id="CHEBI:57328"/>
        <dbReference type="ChEBI" id="CHEBI:456216"/>
        <dbReference type="EC" id="2.7.1.24"/>
    </reaction>
</comment>
<comment type="pathway">
    <text evidence="1">Cofactor biosynthesis; coenzyme A biosynthesis; CoA from (R)-pantothenate: step 5/5.</text>
</comment>
<comment type="subcellular location">
    <subcellularLocation>
        <location evidence="1">Cytoplasm</location>
    </subcellularLocation>
</comment>
<comment type="similarity">
    <text evidence="1">Belongs to the CoaE family.</text>
</comment>
<comment type="sequence caution" evidence="2">
    <conflict type="erroneous initiation">
        <sequence resource="EMBL-CDS" id="AAV62217"/>
    </conflict>
</comment>
<sequence length="197" mass="22194">MIIGLTGGIASGKSTVVEIIKDARYKVIDADQLVHDMQVKGGRLYQALLDWLGYGILLPNGELNRPKLGQLIFSSEEMRYQSAEIQGKIIREELAAKRDCLAKEDDVFFMDIPLLFENDYQDWFDQIWLVAVSPQVQCQRLMKRNHLSAEEAGMRIASQMPLAEKLPYASLVIDNNGNIDDLKKKVKGAIKDLANLV</sequence>
<proteinExistence type="inferred from homology"/>
<name>COAE_STRT1</name>
<evidence type="ECO:0000255" key="1">
    <source>
        <dbReference type="HAMAP-Rule" id="MF_00376"/>
    </source>
</evidence>
<evidence type="ECO:0000305" key="2"/>
<organism>
    <name type="scientific">Streptococcus thermophilus (strain CNRZ 1066)</name>
    <dbReference type="NCBI Taxonomy" id="299768"/>
    <lineage>
        <taxon>Bacteria</taxon>
        <taxon>Bacillati</taxon>
        <taxon>Bacillota</taxon>
        <taxon>Bacilli</taxon>
        <taxon>Lactobacillales</taxon>
        <taxon>Streptococcaceae</taxon>
        <taxon>Streptococcus</taxon>
    </lineage>
</organism>
<reference key="1">
    <citation type="journal article" date="2004" name="Nat. Biotechnol.">
        <title>Complete sequence and comparative genome analysis of the dairy bacterium Streptococcus thermophilus.</title>
        <authorList>
            <person name="Bolotin A."/>
            <person name="Quinquis B."/>
            <person name="Renault P."/>
            <person name="Sorokin A."/>
            <person name="Ehrlich S.D."/>
            <person name="Kulakauskas S."/>
            <person name="Lapidus A."/>
            <person name="Goltsman E."/>
            <person name="Mazur M."/>
            <person name="Pusch G.D."/>
            <person name="Fonstein M."/>
            <person name="Overbeek R."/>
            <person name="Kyprides N."/>
            <person name="Purnelle B."/>
            <person name="Prozzi D."/>
            <person name="Ngui K."/>
            <person name="Masuy D."/>
            <person name="Hancy F."/>
            <person name="Burteau S."/>
            <person name="Boutry M."/>
            <person name="Delcour J."/>
            <person name="Goffeau A."/>
            <person name="Hols P."/>
        </authorList>
    </citation>
    <scope>NUCLEOTIDE SEQUENCE [LARGE SCALE GENOMIC DNA]</scope>
    <source>
        <strain>CNRZ 1066</strain>
    </source>
</reference>
<gene>
    <name evidence="1" type="primary">coaE</name>
    <name type="ordered locus">str0621</name>
</gene>
<protein>
    <recommendedName>
        <fullName evidence="1">Dephospho-CoA kinase</fullName>
        <ecNumber evidence="1">2.7.1.24</ecNumber>
    </recommendedName>
    <alternativeName>
        <fullName evidence="1">Dephosphocoenzyme A kinase</fullName>
    </alternativeName>
</protein>
<accession>Q5M0N9</accession>
<dbReference type="EC" id="2.7.1.24" evidence="1"/>
<dbReference type="EMBL" id="CP000024">
    <property type="protein sequence ID" value="AAV62217.1"/>
    <property type="status" value="ALT_INIT"/>
    <property type="molecule type" value="Genomic_DNA"/>
</dbReference>
<dbReference type="RefSeq" id="WP_041826991.1">
    <property type="nucleotide sequence ID" value="NC_006449.1"/>
</dbReference>
<dbReference type="SMR" id="Q5M0N9"/>
<dbReference type="KEGG" id="stc:str0621"/>
<dbReference type="HOGENOM" id="CLU_057180_0_0_9"/>
<dbReference type="UniPathway" id="UPA00241">
    <property type="reaction ID" value="UER00356"/>
</dbReference>
<dbReference type="GO" id="GO:0005737">
    <property type="term" value="C:cytoplasm"/>
    <property type="evidence" value="ECO:0007669"/>
    <property type="project" value="UniProtKB-SubCell"/>
</dbReference>
<dbReference type="GO" id="GO:0005524">
    <property type="term" value="F:ATP binding"/>
    <property type="evidence" value="ECO:0007669"/>
    <property type="project" value="UniProtKB-UniRule"/>
</dbReference>
<dbReference type="GO" id="GO:0004140">
    <property type="term" value="F:dephospho-CoA kinase activity"/>
    <property type="evidence" value="ECO:0007669"/>
    <property type="project" value="UniProtKB-UniRule"/>
</dbReference>
<dbReference type="GO" id="GO:0015937">
    <property type="term" value="P:coenzyme A biosynthetic process"/>
    <property type="evidence" value="ECO:0007669"/>
    <property type="project" value="UniProtKB-UniRule"/>
</dbReference>
<dbReference type="CDD" id="cd02022">
    <property type="entry name" value="DPCK"/>
    <property type="match status" value="1"/>
</dbReference>
<dbReference type="Gene3D" id="3.40.50.300">
    <property type="entry name" value="P-loop containing nucleotide triphosphate hydrolases"/>
    <property type="match status" value="1"/>
</dbReference>
<dbReference type="HAMAP" id="MF_00376">
    <property type="entry name" value="Dephospho_CoA_kinase"/>
    <property type="match status" value="1"/>
</dbReference>
<dbReference type="InterPro" id="IPR001977">
    <property type="entry name" value="Depp_CoAkinase"/>
</dbReference>
<dbReference type="InterPro" id="IPR027417">
    <property type="entry name" value="P-loop_NTPase"/>
</dbReference>
<dbReference type="NCBIfam" id="TIGR00152">
    <property type="entry name" value="dephospho-CoA kinase"/>
    <property type="match status" value="1"/>
</dbReference>
<dbReference type="PANTHER" id="PTHR10695:SF46">
    <property type="entry name" value="BIFUNCTIONAL COENZYME A SYNTHASE-RELATED"/>
    <property type="match status" value="1"/>
</dbReference>
<dbReference type="PANTHER" id="PTHR10695">
    <property type="entry name" value="DEPHOSPHO-COA KINASE-RELATED"/>
    <property type="match status" value="1"/>
</dbReference>
<dbReference type="Pfam" id="PF01121">
    <property type="entry name" value="CoaE"/>
    <property type="match status" value="1"/>
</dbReference>
<dbReference type="SUPFAM" id="SSF52540">
    <property type="entry name" value="P-loop containing nucleoside triphosphate hydrolases"/>
    <property type="match status" value="1"/>
</dbReference>
<dbReference type="PROSITE" id="PS51219">
    <property type="entry name" value="DPCK"/>
    <property type="match status" value="1"/>
</dbReference>